<organism>
    <name type="scientific">Escherichia coli O7:K1 (strain IAI39 / ExPEC)</name>
    <dbReference type="NCBI Taxonomy" id="585057"/>
    <lineage>
        <taxon>Bacteria</taxon>
        <taxon>Pseudomonadati</taxon>
        <taxon>Pseudomonadota</taxon>
        <taxon>Gammaproteobacteria</taxon>
        <taxon>Enterobacterales</taxon>
        <taxon>Enterobacteriaceae</taxon>
        <taxon>Escherichia</taxon>
    </lineage>
</organism>
<name>MIAB_ECO7I</name>
<evidence type="ECO:0000255" key="1">
    <source>
        <dbReference type="HAMAP-Rule" id="MF_01864"/>
    </source>
</evidence>
<evidence type="ECO:0000255" key="2">
    <source>
        <dbReference type="PROSITE-ProRule" id="PRU01266"/>
    </source>
</evidence>
<proteinExistence type="inferred from homology"/>
<reference key="1">
    <citation type="journal article" date="2009" name="PLoS Genet.">
        <title>Organised genome dynamics in the Escherichia coli species results in highly diverse adaptive paths.</title>
        <authorList>
            <person name="Touchon M."/>
            <person name="Hoede C."/>
            <person name="Tenaillon O."/>
            <person name="Barbe V."/>
            <person name="Baeriswyl S."/>
            <person name="Bidet P."/>
            <person name="Bingen E."/>
            <person name="Bonacorsi S."/>
            <person name="Bouchier C."/>
            <person name="Bouvet O."/>
            <person name="Calteau A."/>
            <person name="Chiapello H."/>
            <person name="Clermont O."/>
            <person name="Cruveiller S."/>
            <person name="Danchin A."/>
            <person name="Diard M."/>
            <person name="Dossat C."/>
            <person name="Karoui M.E."/>
            <person name="Frapy E."/>
            <person name="Garry L."/>
            <person name="Ghigo J.M."/>
            <person name="Gilles A.M."/>
            <person name="Johnson J."/>
            <person name="Le Bouguenec C."/>
            <person name="Lescat M."/>
            <person name="Mangenot S."/>
            <person name="Martinez-Jehanne V."/>
            <person name="Matic I."/>
            <person name="Nassif X."/>
            <person name="Oztas S."/>
            <person name="Petit M.A."/>
            <person name="Pichon C."/>
            <person name="Rouy Z."/>
            <person name="Ruf C.S."/>
            <person name="Schneider D."/>
            <person name="Tourret J."/>
            <person name="Vacherie B."/>
            <person name="Vallenet D."/>
            <person name="Medigue C."/>
            <person name="Rocha E.P.C."/>
            <person name="Denamur E."/>
        </authorList>
    </citation>
    <scope>NUCLEOTIDE SEQUENCE [LARGE SCALE GENOMIC DNA]</scope>
    <source>
        <strain>IAI39 / ExPEC</strain>
    </source>
</reference>
<accession>B7NM12</accession>
<sequence length="474" mass="53663">MTKKLHIKTWGCQMNEYDSSKMADLLDATHGYQLTDVAEEADVLLLNTCSIREKAQEKVFHQLGRWKLLKEKNPDLIIGVGGCVASQEGEHIRQRAHYVDIIFGPQTLHRLPEMINSVRGDRSPVVDISFPEIEKFDRLPEPRAEGPTAFVSIMEGCNKYCTYCVVPYTRGEEVSRPSDDILFEIAQLAAQGVREVNLLGQNVNAWRGENYDGTTGSFADLLRLVAAIDGIDRIRFTTSHPIEFTDDIIEVYRDTPELVSFLHLPVQSGSDRILNLMGRTHTALEYKAIIRKLRAARPDIQISSDFIVGFPGETTEDFEKTMKLIADVNFDMSYSFIFSARPGTPAADMVDDVPEEEKKQRLYILQERINQQAMAWSRRMLGTTQRILVEGTSRKSIMELSGRTENNRVVNFEGTPDMIGKFVDVEITDVYPNSLRGKVVRTEDEMGLRVAETPESVIARTRKENDLGVGYYQP</sequence>
<comment type="function">
    <text evidence="1">Catalyzes the methylthiolation of N6-(dimethylallyl)adenosine (i(6)A), leading to the formation of 2-methylthio-N6-(dimethylallyl)adenosine (ms(2)i(6)A) at position 37 in tRNAs that read codons beginning with uridine.</text>
</comment>
<comment type="catalytic activity">
    <reaction evidence="1">
        <text>N(6)-dimethylallyladenosine(37) in tRNA + (sulfur carrier)-SH + AH2 + 2 S-adenosyl-L-methionine = 2-methylsulfanyl-N(6)-dimethylallyladenosine(37) in tRNA + (sulfur carrier)-H + 5'-deoxyadenosine + L-methionine + A + S-adenosyl-L-homocysteine + 2 H(+)</text>
        <dbReference type="Rhea" id="RHEA:37067"/>
        <dbReference type="Rhea" id="RHEA-COMP:10375"/>
        <dbReference type="Rhea" id="RHEA-COMP:10376"/>
        <dbReference type="Rhea" id="RHEA-COMP:14737"/>
        <dbReference type="Rhea" id="RHEA-COMP:14739"/>
        <dbReference type="ChEBI" id="CHEBI:13193"/>
        <dbReference type="ChEBI" id="CHEBI:15378"/>
        <dbReference type="ChEBI" id="CHEBI:17319"/>
        <dbReference type="ChEBI" id="CHEBI:17499"/>
        <dbReference type="ChEBI" id="CHEBI:29917"/>
        <dbReference type="ChEBI" id="CHEBI:57844"/>
        <dbReference type="ChEBI" id="CHEBI:57856"/>
        <dbReference type="ChEBI" id="CHEBI:59789"/>
        <dbReference type="ChEBI" id="CHEBI:64428"/>
        <dbReference type="ChEBI" id="CHEBI:74415"/>
        <dbReference type="ChEBI" id="CHEBI:74417"/>
        <dbReference type="EC" id="2.8.4.3"/>
    </reaction>
</comment>
<comment type="cofactor">
    <cofactor evidence="1">
        <name>[4Fe-4S] cluster</name>
        <dbReference type="ChEBI" id="CHEBI:49883"/>
    </cofactor>
    <text evidence="1">Binds 2 [4Fe-4S] clusters. One cluster is coordinated with 3 cysteines and an exchangeable S-adenosyl-L-methionine.</text>
</comment>
<comment type="subunit">
    <text evidence="1">Monomer.</text>
</comment>
<comment type="subcellular location">
    <subcellularLocation>
        <location evidence="1">Cytoplasm</location>
    </subcellularLocation>
</comment>
<comment type="similarity">
    <text evidence="1">Belongs to the methylthiotransferase family. MiaB subfamily.</text>
</comment>
<feature type="chain" id="PRO_0000374293" description="tRNA-2-methylthio-N(6)-dimethylallyladenosine synthase">
    <location>
        <begin position="1"/>
        <end position="474"/>
    </location>
</feature>
<feature type="domain" description="MTTase N-terminal" evidence="1">
    <location>
        <begin position="3"/>
        <end position="120"/>
    </location>
</feature>
<feature type="domain" description="Radical SAM core" evidence="2">
    <location>
        <begin position="143"/>
        <end position="375"/>
    </location>
</feature>
<feature type="domain" description="TRAM" evidence="1">
    <location>
        <begin position="378"/>
        <end position="441"/>
    </location>
</feature>
<feature type="binding site" evidence="1">
    <location>
        <position position="12"/>
    </location>
    <ligand>
        <name>[4Fe-4S] cluster</name>
        <dbReference type="ChEBI" id="CHEBI:49883"/>
        <label>1</label>
    </ligand>
</feature>
<feature type="binding site" evidence="1">
    <location>
        <position position="49"/>
    </location>
    <ligand>
        <name>[4Fe-4S] cluster</name>
        <dbReference type="ChEBI" id="CHEBI:49883"/>
        <label>1</label>
    </ligand>
</feature>
<feature type="binding site" evidence="1">
    <location>
        <position position="83"/>
    </location>
    <ligand>
        <name>[4Fe-4S] cluster</name>
        <dbReference type="ChEBI" id="CHEBI:49883"/>
        <label>1</label>
    </ligand>
</feature>
<feature type="binding site" evidence="1">
    <location>
        <position position="157"/>
    </location>
    <ligand>
        <name>[4Fe-4S] cluster</name>
        <dbReference type="ChEBI" id="CHEBI:49883"/>
        <label>2</label>
        <note>4Fe-4S-S-AdoMet</note>
    </ligand>
</feature>
<feature type="binding site" evidence="1">
    <location>
        <position position="161"/>
    </location>
    <ligand>
        <name>[4Fe-4S] cluster</name>
        <dbReference type="ChEBI" id="CHEBI:49883"/>
        <label>2</label>
        <note>4Fe-4S-S-AdoMet</note>
    </ligand>
</feature>
<feature type="binding site" evidence="1">
    <location>
        <position position="164"/>
    </location>
    <ligand>
        <name>[4Fe-4S] cluster</name>
        <dbReference type="ChEBI" id="CHEBI:49883"/>
        <label>2</label>
        <note>4Fe-4S-S-AdoMet</note>
    </ligand>
</feature>
<gene>
    <name evidence="1" type="primary">miaB</name>
    <name type="ordered locus">ECIAI39_0628</name>
</gene>
<dbReference type="EC" id="2.8.4.3" evidence="1"/>
<dbReference type="EMBL" id="CU928164">
    <property type="protein sequence ID" value="CAR16765.1"/>
    <property type="molecule type" value="Genomic_DNA"/>
</dbReference>
<dbReference type="RefSeq" id="WP_000162740.1">
    <property type="nucleotide sequence ID" value="NC_011750.1"/>
</dbReference>
<dbReference type="RefSeq" id="YP_002406654.1">
    <property type="nucleotide sequence ID" value="NC_011750.1"/>
</dbReference>
<dbReference type="SMR" id="B7NM12"/>
<dbReference type="STRING" id="585057.ECIAI39_0628"/>
<dbReference type="GeneID" id="86863171"/>
<dbReference type="KEGG" id="ect:ECIAI39_0628"/>
<dbReference type="PATRIC" id="fig|585057.6.peg.669"/>
<dbReference type="HOGENOM" id="CLU_018697_2_0_6"/>
<dbReference type="Proteomes" id="UP000000749">
    <property type="component" value="Chromosome"/>
</dbReference>
<dbReference type="GO" id="GO:0005829">
    <property type="term" value="C:cytosol"/>
    <property type="evidence" value="ECO:0007669"/>
    <property type="project" value="TreeGrafter"/>
</dbReference>
<dbReference type="GO" id="GO:0051539">
    <property type="term" value="F:4 iron, 4 sulfur cluster binding"/>
    <property type="evidence" value="ECO:0007669"/>
    <property type="project" value="UniProtKB-UniRule"/>
</dbReference>
<dbReference type="GO" id="GO:0046872">
    <property type="term" value="F:metal ion binding"/>
    <property type="evidence" value="ECO:0007669"/>
    <property type="project" value="UniProtKB-KW"/>
</dbReference>
<dbReference type="GO" id="GO:0035597">
    <property type="term" value="F:N6-isopentenyladenosine methylthiotransferase activity"/>
    <property type="evidence" value="ECO:0007669"/>
    <property type="project" value="TreeGrafter"/>
</dbReference>
<dbReference type="CDD" id="cd01335">
    <property type="entry name" value="Radical_SAM"/>
    <property type="match status" value="1"/>
</dbReference>
<dbReference type="FunFam" id="3.40.50.12160:FF:000001">
    <property type="entry name" value="tRNA-2-methylthio-N(6)-dimethylallyladenosine synthase"/>
    <property type="match status" value="1"/>
</dbReference>
<dbReference type="FunFam" id="3.80.30.20:FF:000001">
    <property type="entry name" value="tRNA-2-methylthio-N(6)-dimethylallyladenosine synthase 2"/>
    <property type="match status" value="1"/>
</dbReference>
<dbReference type="Gene3D" id="3.40.50.12160">
    <property type="entry name" value="Methylthiotransferase, N-terminal domain"/>
    <property type="match status" value="1"/>
</dbReference>
<dbReference type="Gene3D" id="3.80.30.20">
    <property type="entry name" value="tm_1862 like domain"/>
    <property type="match status" value="1"/>
</dbReference>
<dbReference type="HAMAP" id="MF_01864">
    <property type="entry name" value="tRNA_metthiotr_MiaB"/>
    <property type="match status" value="1"/>
</dbReference>
<dbReference type="InterPro" id="IPR006638">
    <property type="entry name" value="Elp3/MiaA/NifB-like_rSAM"/>
</dbReference>
<dbReference type="InterPro" id="IPR005839">
    <property type="entry name" value="Methylthiotransferase"/>
</dbReference>
<dbReference type="InterPro" id="IPR020612">
    <property type="entry name" value="Methylthiotransferase_CS"/>
</dbReference>
<dbReference type="InterPro" id="IPR013848">
    <property type="entry name" value="Methylthiotransferase_N"/>
</dbReference>
<dbReference type="InterPro" id="IPR038135">
    <property type="entry name" value="Methylthiotransferase_N_sf"/>
</dbReference>
<dbReference type="InterPro" id="IPR006463">
    <property type="entry name" value="MiaB_methiolase"/>
</dbReference>
<dbReference type="InterPro" id="IPR007197">
    <property type="entry name" value="rSAM"/>
</dbReference>
<dbReference type="InterPro" id="IPR023404">
    <property type="entry name" value="rSAM_horseshoe"/>
</dbReference>
<dbReference type="InterPro" id="IPR002792">
    <property type="entry name" value="TRAM_dom"/>
</dbReference>
<dbReference type="NCBIfam" id="TIGR01574">
    <property type="entry name" value="miaB-methiolase"/>
    <property type="match status" value="1"/>
</dbReference>
<dbReference type="NCBIfam" id="TIGR00089">
    <property type="entry name" value="MiaB/RimO family radical SAM methylthiotransferase"/>
    <property type="match status" value="1"/>
</dbReference>
<dbReference type="PANTHER" id="PTHR43020">
    <property type="entry name" value="CDK5 REGULATORY SUBUNIT-ASSOCIATED PROTEIN 1"/>
    <property type="match status" value="1"/>
</dbReference>
<dbReference type="PANTHER" id="PTHR43020:SF2">
    <property type="entry name" value="MITOCHONDRIAL TRNA METHYLTHIOTRANSFERASE CDK5RAP1"/>
    <property type="match status" value="1"/>
</dbReference>
<dbReference type="Pfam" id="PF04055">
    <property type="entry name" value="Radical_SAM"/>
    <property type="match status" value="1"/>
</dbReference>
<dbReference type="Pfam" id="PF01938">
    <property type="entry name" value="TRAM"/>
    <property type="match status" value="1"/>
</dbReference>
<dbReference type="Pfam" id="PF00919">
    <property type="entry name" value="UPF0004"/>
    <property type="match status" value="1"/>
</dbReference>
<dbReference type="SFLD" id="SFLDF00273">
    <property type="entry name" value="(dimethylallyl)adenosine_tRNA"/>
    <property type="match status" value="1"/>
</dbReference>
<dbReference type="SFLD" id="SFLDG01082">
    <property type="entry name" value="B12-binding_domain_containing"/>
    <property type="match status" value="1"/>
</dbReference>
<dbReference type="SFLD" id="SFLDS00029">
    <property type="entry name" value="Radical_SAM"/>
    <property type="match status" value="1"/>
</dbReference>
<dbReference type="SMART" id="SM00729">
    <property type="entry name" value="Elp3"/>
    <property type="match status" value="1"/>
</dbReference>
<dbReference type="SUPFAM" id="SSF102114">
    <property type="entry name" value="Radical SAM enzymes"/>
    <property type="match status" value="1"/>
</dbReference>
<dbReference type="PROSITE" id="PS51449">
    <property type="entry name" value="MTTASE_N"/>
    <property type="match status" value="1"/>
</dbReference>
<dbReference type="PROSITE" id="PS01278">
    <property type="entry name" value="MTTASE_RADICAL"/>
    <property type="match status" value="1"/>
</dbReference>
<dbReference type="PROSITE" id="PS51918">
    <property type="entry name" value="RADICAL_SAM"/>
    <property type="match status" value="1"/>
</dbReference>
<dbReference type="PROSITE" id="PS50926">
    <property type="entry name" value="TRAM"/>
    <property type="match status" value="1"/>
</dbReference>
<protein>
    <recommendedName>
        <fullName evidence="1">tRNA-2-methylthio-N(6)-dimethylallyladenosine synthase</fullName>
        <ecNumber evidence="1">2.8.4.3</ecNumber>
    </recommendedName>
    <alternativeName>
        <fullName evidence="1">(Dimethylallyl)adenosine tRNA methylthiotransferase MiaB</fullName>
    </alternativeName>
    <alternativeName>
        <fullName evidence="1">tRNA-i(6)A37 methylthiotransferase</fullName>
    </alternativeName>
</protein>
<keyword id="KW-0004">4Fe-4S</keyword>
<keyword id="KW-0963">Cytoplasm</keyword>
<keyword id="KW-0408">Iron</keyword>
<keyword id="KW-0411">Iron-sulfur</keyword>
<keyword id="KW-0479">Metal-binding</keyword>
<keyword id="KW-0949">S-adenosyl-L-methionine</keyword>
<keyword id="KW-0808">Transferase</keyword>
<keyword id="KW-0819">tRNA processing</keyword>